<sequence length="173" mass="20152">MKTWYMVVVIGFLATLAQTSLALKEEDCEVCVKTVRRFADSLDESTKKDYKQIETAFKKFCKTQKNKEHRFCYYLGGLEESATGILNELSKPLSWSMPAEKVCEKLKKKDAQVCDLRYEKQIDLNSVDLKKLKVRDLKKILNDWDESCDGCLEKGDFIKRIEELKPKYSRSEL</sequence>
<dbReference type="EMBL" id="CH954181">
    <property type="protein sequence ID" value="EDV49132.1"/>
    <property type="molecule type" value="Genomic_DNA"/>
</dbReference>
<dbReference type="SMR" id="B3P113"/>
<dbReference type="EnsemblMetazoa" id="FBtr0137053">
    <property type="protein sequence ID" value="FBpp0135545"/>
    <property type="gene ID" value="FBgn0109227"/>
</dbReference>
<dbReference type="EnsemblMetazoa" id="XM_001980138.3">
    <property type="protein sequence ID" value="XP_001980174.1"/>
    <property type="gene ID" value="LOC6553590"/>
</dbReference>
<dbReference type="GeneID" id="6553590"/>
<dbReference type="KEGG" id="der:6553590"/>
<dbReference type="CTD" id="7873"/>
<dbReference type="eggNOG" id="KOG4154">
    <property type="taxonomic scope" value="Eukaryota"/>
</dbReference>
<dbReference type="HOGENOM" id="CLU_099080_1_0_1"/>
<dbReference type="OMA" id="WSMPADK"/>
<dbReference type="OrthoDB" id="5597848at2759"/>
<dbReference type="PhylomeDB" id="B3P113"/>
<dbReference type="ChiTaRS" id="Manf">
    <property type="organism name" value="fly"/>
</dbReference>
<dbReference type="Proteomes" id="UP000008711">
    <property type="component" value="Unassembled WGS sequence"/>
</dbReference>
<dbReference type="GO" id="GO:0005783">
    <property type="term" value="C:endoplasmic reticulum"/>
    <property type="evidence" value="ECO:0007669"/>
    <property type="project" value="EnsemblMetazoa"/>
</dbReference>
<dbReference type="GO" id="GO:0005615">
    <property type="term" value="C:extracellular space"/>
    <property type="evidence" value="ECO:0007669"/>
    <property type="project" value="TreeGrafter"/>
</dbReference>
<dbReference type="GO" id="GO:0045202">
    <property type="term" value="C:synapse"/>
    <property type="evidence" value="ECO:0007669"/>
    <property type="project" value="GOC"/>
</dbReference>
<dbReference type="GO" id="GO:0042417">
    <property type="term" value="P:dopamine metabolic process"/>
    <property type="evidence" value="ECO:0007669"/>
    <property type="project" value="EnsemblMetazoa"/>
</dbReference>
<dbReference type="GO" id="GO:0071542">
    <property type="term" value="P:dopaminergic neuron differentiation"/>
    <property type="evidence" value="ECO:0007669"/>
    <property type="project" value="TreeGrafter"/>
</dbReference>
<dbReference type="GO" id="GO:0070050">
    <property type="term" value="P:neuron cellular homeostasis"/>
    <property type="evidence" value="ECO:0007669"/>
    <property type="project" value="EnsemblMetazoa"/>
</dbReference>
<dbReference type="GO" id="GO:0031175">
    <property type="term" value="P:neuron projection development"/>
    <property type="evidence" value="ECO:0007669"/>
    <property type="project" value="EnsemblMetazoa"/>
</dbReference>
<dbReference type="GO" id="GO:0001963">
    <property type="term" value="P:synaptic transmission, dopaminergic"/>
    <property type="evidence" value="ECO:0007669"/>
    <property type="project" value="EnsemblMetazoa"/>
</dbReference>
<dbReference type="FunFam" id="1.10.225.10:FF:000003">
    <property type="entry name" value="Mesencephalic astrocyte-derived neurotrophic factor"/>
    <property type="match status" value="1"/>
</dbReference>
<dbReference type="FunFam" id="1.10.720.30:FF:000003">
    <property type="entry name" value="Mesencephalic astrocyte-derived neurotrophic factor"/>
    <property type="match status" value="1"/>
</dbReference>
<dbReference type="Gene3D" id="1.10.720.30">
    <property type="entry name" value="SAP domain"/>
    <property type="match status" value="1"/>
</dbReference>
<dbReference type="Gene3D" id="1.10.225.10">
    <property type="entry name" value="Saposin-like"/>
    <property type="match status" value="1"/>
</dbReference>
<dbReference type="InterPro" id="IPR045333">
    <property type="entry name" value="ARMET-like"/>
</dbReference>
<dbReference type="InterPro" id="IPR019345">
    <property type="entry name" value="ARMET_C"/>
</dbReference>
<dbReference type="InterPro" id="IPR045332">
    <property type="entry name" value="ARMET_N"/>
</dbReference>
<dbReference type="InterPro" id="IPR018247">
    <property type="entry name" value="EF_Hand_1_Ca_BS"/>
</dbReference>
<dbReference type="InterPro" id="IPR036361">
    <property type="entry name" value="SAP_dom_sf"/>
</dbReference>
<dbReference type="PANTHER" id="PTHR12990">
    <property type="entry name" value="ARMET-LIKE PROTEIN"/>
    <property type="match status" value="1"/>
</dbReference>
<dbReference type="PANTHER" id="PTHR12990:SF5">
    <property type="entry name" value="MESENCEPHALIC ASTROCYTE-DERIVED NEUROTROPHIC FACTOR HOMOLOG"/>
    <property type="match status" value="1"/>
</dbReference>
<dbReference type="Pfam" id="PF10208">
    <property type="entry name" value="ARMET_C"/>
    <property type="match status" value="1"/>
</dbReference>
<dbReference type="Pfam" id="PF20145">
    <property type="entry name" value="ARMET_N"/>
    <property type="match status" value="1"/>
</dbReference>
<dbReference type="SUPFAM" id="SSF68906">
    <property type="entry name" value="SAP domain"/>
    <property type="match status" value="1"/>
</dbReference>
<name>ARMET_DROER</name>
<keyword id="KW-0217">Developmental protein</keyword>
<keyword id="KW-1015">Disulfide bond</keyword>
<keyword id="KW-0964">Secreted</keyword>
<keyword id="KW-0732">Signal</keyword>
<organism>
    <name type="scientific">Drosophila erecta</name>
    <name type="common">Fruit fly</name>
    <dbReference type="NCBI Taxonomy" id="7220"/>
    <lineage>
        <taxon>Eukaryota</taxon>
        <taxon>Metazoa</taxon>
        <taxon>Ecdysozoa</taxon>
        <taxon>Arthropoda</taxon>
        <taxon>Hexapoda</taxon>
        <taxon>Insecta</taxon>
        <taxon>Pterygota</taxon>
        <taxon>Neoptera</taxon>
        <taxon>Endopterygota</taxon>
        <taxon>Diptera</taxon>
        <taxon>Brachycera</taxon>
        <taxon>Muscomorpha</taxon>
        <taxon>Ephydroidea</taxon>
        <taxon>Drosophilidae</taxon>
        <taxon>Drosophila</taxon>
        <taxon>Sophophora</taxon>
    </lineage>
</organism>
<evidence type="ECO:0000250" key="1">
    <source>
        <dbReference type="UniProtKB" id="P55145"/>
    </source>
</evidence>
<evidence type="ECO:0000250" key="2">
    <source>
        <dbReference type="UniProtKB" id="Q9XZ63"/>
    </source>
</evidence>
<evidence type="ECO:0000255" key="3"/>
<evidence type="ECO:0000312" key="4">
    <source>
        <dbReference type="EMBL" id="EDV49132.1"/>
    </source>
</evidence>
<comment type="function">
    <text evidence="2">Required during the maturation of the embryonic nervous system for maintenance of neuronal and cuticular connectivity. Essential for maintenance of dopaminergic neurons and dopamine levels (By similarity).</text>
</comment>
<comment type="subcellular location">
    <subcellularLocation>
        <location evidence="2">Secreted</location>
    </subcellularLocation>
</comment>
<comment type="similarity">
    <text evidence="3">Belongs to the ARMET family.</text>
</comment>
<accession>B3P113</accession>
<gene>
    <name evidence="2" type="primary">Manf</name>
    <name type="ORF">GG16999</name>
</gene>
<reference evidence="4" key="1">
    <citation type="journal article" date="2007" name="Nature">
        <title>Evolution of genes and genomes on the Drosophila phylogeny.</title>
        <authorList>
            <consortium name="Drosophila 12 genomes consortium"/>
        </authorList>
    </citation>
    <scope>NUCLEOTIDE SEQUENCE [LARGE SCALE GENOMIC DNA]</scope>
    <source>
        <strain evidence="4">Tucson 14021-0224.01</strain>
    </source>
</reference>
<protein>
    <recommendedName>
        <fullName>Mesencephalic astrocyte-derived neurotrophic factor homolog</fullName>
    </recommendedName>
    <alternativeName>
        <fullName>MANF/CDNF-like protein</fullName>
    </alternativeName>
</protein>
<feature type="signal peptide" evidence="3">
    <location>
        <begin position="1"/>
        <end position="22"/>
    </location>
</feature>
<feature type="chain" id="PRO_0000390939" description="Mesencephalic astrocyte-derived neurotrophic factor homolog">
    <location>
        <begin position="23"/>
        <end position="173"/>
    </location>
</feature>
<feature type="disulfide bond" evidence="1">
    <location>
        <begin position="28"/>
        <end position="114"/>
    </location>
</feature>
<feature type="disulfide bond" evidence="1">
    <location>
        <begin position="31"/>
        <end position="103"/>
    </location>
</feature>
<feature type="disulfide bond" evidence="1">
    <location>
        <begin position="61"/>
        <end position="72"/>
    </location>
</feature>
<feature type="disulfide bond" evidence="1">
    <location>
        <begin position="148"/>
        <end position="151"/>
    </location>
</feature>
<proteinExistence type="inferred from homology"/>